<name>DCUP_CUPMC</name>
<organism>
    <name type="scientific">Cupriavidus metallidurans (strain ATCC 43123 / DSM 2839 / NBRC 102507 / CH34)</name>
    <name type="common">Ralstonia metallidurans</name>
    <dbReference type="NCBI Taxonomy" id="266264"/>
    <lineage>
        <taxon>Bacteria</taxon>
        <taxon>Pseudomonadati</taxon>
        <taxon>Pseudomonadota</taxon>
        <taxon>Betaproteobacteria</taxon>
        <taxon>Burkholderiales</taxon>
        <taxon>Burkholderiaceae</taxon>
        <taxon>Cupriavidus</taxon>
    </lineage>
</organism>
<comment type="function">
    <text evidence="1">Catalyzes the decarboxylation of four acetate groups of uroporphyrinogen-III to yield coproporphyrinogen-III.</text>
</comment>
<comment type="catalytic activity">
    <reaction evidence="1">
        <text>uroporphyrinogen III + 4 H(+) = coproporphyrinogen III + 4 CO2</text>
        <dbReference type="Rhea" id="RHEA:19865"/>
        <dbReference type="ChEBI" id="CHEBI:15378"/>
        <dbReference type="ChEBI" id="CHEBI:16526"/>
        <dbReference type="ChEBI" id="CHEBI:57308"/>
        <dbReference type="ChEBI" id="CHEBI:57309"/>
        <dbReference type="EC" id="4.1.1.37"/>
    </reaction>
</comment>
<comment type="pathway">
    <text evidence="1">Porphyrin-containing compound metabolism; protoporphyrin-IX biosynthesis; coproporphyrinogen-III from 5-aminolevulinate: step 4/4.</text>
</comment>
<comment type="subunit">
    <text evidence="1">Homodimer.</text>
</comment>
<comment type="subcellular location">
    <subcellularLocation>
        <location evidence="1">Cytoplasm</location>
    </subcellularLocation>
</comment>
<comment type="similarity">
    <text evidence="1">Belongs to the uroporphyrinogen decarboxylase family.</text>
</comment>
<protein>
    <recommendedName>
        <fullName evidence="1">Uroporphyrinogen decarboxylase</fullName>
        <shortName evidence="1">UPD</shortName>
        <shortName evidence="1">URO-D</shortName>
        <ecNumber evidence="1">4.1.1.37</ecNumber>
    </recommendedName>
</protein>
<accession>Q1LHL3</accession>
<keyword id="KW-0963">Cytoplasm</keyword>
<keyword id="KW-0210">Decarboxylase</keyword>
<keyword id="KW-0456">Lyase</keyword>
<keyword id="KW-0627">Porphyrin biosynthesis</keyword>
<keyword id="KW-1185">Reference proteome</keyword>
<proteinExistence type="inferred from homology"/>
<sequence>MTALQNDTFLRALRRQPTEYTPLWLMRQAGRYLPEYNATRARAGSFLGLAKNPAYATEVTLQPLDRYPLDAAILFSDILTVPDAMGLGLSFAQGEGPRFAHPLRTEADVAKLAVPDMASLQYVFDAVSEIRKALVQDGRQRVPLIGFSGSPWTLACYMVEGGGSDDFRTVKAMMYARPDLMHRILDINATAVSAYLNAQIEAGAQAVMVFDTWGGALADGMYQAFSLAYMRKVLQGLKREHDGQQIPVIVFTKGGGIWLEEIAGIGPDAIGLDWTVNLAKARRRTEGRVALQGNIDPTVLFASESAIREQVRGVLDSYASAGGSDGHVFNLGHGISQFTPPENVSVLVDEVHNHSRKLRAGQVAAAV</sequence>
<dbReference type="EC" id="4.1.1.37" evidence="1"/>
<dbReference type="EMBL" id="CP000352">
    <property type="protein sequence ID" value="ABF10363.1"/>
    <property type="molecule type" value="Genomic_DNA"/>
</dbReference>
<dbReference type="RefSeq" id="WP_008650152.1">
    <property type="nucleotide sequence ID" value="NC_007973.1"/>
</dbReference>
<dbReference type="SMR" id="Q1LHL3"/>
<dbReference type="STRING" id="266264.Rmet_3491"/>
<dbReference type="GeneID" id="60822597"/>
<dbReference type="KEGG" id="rme:Rmet_3491"/>
<dbReference type="eggNOG" id="COG0407">
    <property type="taxonomic scope" value="Bacteria"/>
</dbReference>
<dbReference type="HOGENOM" id="CLU_040933_0_0_4"/>
<dbReference type="UniPathway" id="UPA00251">
    <property type="reaction ID" value="UER00321"/>
</dbReference>
<dbReference type="Proteomes" id="UP000002429">
    <property type="component" value="Chromosome"/>
</dbReference>
<dbReference type="GO" id="GO:0005829">
    <property type="term" value="C:cytosol"/>
    <property type="evidence" value="ECO:0007669"/>
    <property type="project" value="TreeGrafter"/>
</dbReference>
<dbReference type="GO" id="GO:0004853">
    <property type="term" value="F:uroporphyrinogen decarboxylase activity"/>
    <property type="evidence" value="ECO:0007669"/>
    <property type="project" value="UniProtKB-UniRule"/>
</dbReference>
<dbReference type="GO" id="GO:0019353">
    <property type="term" value="P:protoporphyrinogen IX biosynthetic process from glutamate"/>
    <property type="evidence" value="ECO:0007669"/>
    <property type="project" value="TreeGrafter"/>
</dbReference>
<dbReference type="CDD" id="cd00717">
    <property type="entry name" value="URO-D"/>
    <property type="match status" value="1"/>
</dbReference>
<dbReference type="FunFam" id="3.20.20.210:FF:000001">
    <property type="entry name" value="Uroporphyrinogen decarboxylase"/>
    <property type="match status" value="1"/>
</dbReference>
<dbReference type="Gene3D" id="3.20.20.210">
    <property type="match status" value="1"/>
</dbReference>
<dbReference type="HAMAP" id="MF_00218">
    <property type="entry name" value="URO_D"/>
    <property type="match status" value="1"/>
</dbReference>
<dbReference type="InterPro" id="IPR038071">
    <property type="entry name" value="UROD/MetE-like_sf"/>
</dbReference>
<dbReference type="InterPro" id="IPR006361">
    <property type="entry name" value="Uroporphyrinogen_deCO2ase_HemE"/>
</dbReference>
<dbReference type="InterPro" id="IPR000257">
    <property type="entry name" value="Uroporphyrinogen_deCOase"/>
</dbReference>
<dbReference type="NCBIfam" id="TIGR01464">
    <property type="entry name" value="hemE"/>
    <property type="match status" value="1"/>
</dbReference>
<dbReference type="PANTHER" id="PTHR21091">
    <property type="entry name" value="METHYLTETRAHYDROFOLATE:HOMOCYSTEINE METHYLTRANSFERASE RELATED"/>
    <property type="match status" value="1"/>
</dbReference>
<dbReference type="PANTHER" id="PTHR21091:SF169">
    <property type="entry name" value="UROPORPHYRINOGEN DECARBOXYLASE"/>
    <property type="match status" value="1"/>
</dbReference>
<dbReference type="Pfam" id="PF01208">
    <property type="entry name" value="URO-D"/>
    <property type="match status" value="1"/>
</dbReference>
<dbReference type="SUPFAM" id="SSF51726">
    <property type="entry name" value="UROD/MetE-like"/>
    <property type="match status" value="1"/>
</dbReference>
<dbReference type="PROSITE" id="PS00906">
    <property type="entry name" value="UROD_1"/>
    <property type="match status" value="1"/>
</dbReference>
<dbReference type="PROSITE" id="PS00907">
    <property type="entry name" value="UROD_2"/>
    <property type="match status" value="1"/>
</dbReference>
<evidence type="ECO:0000255" key="1">
    <source>
        <dbReference type="HAMAP-Rule" id="MF_00218"/>
    </source>
</evidence>
<reference key="1">
    <citation type="journal article" date="2010" name="PLoS ONE">
        <title>The complete genome sequence of Cupriavidus metallidurans strain CH34, a master survivalist in harsh and anthropogenic environments.</title>
        <authorList>
            <person name="Janssen P.J."/>
            <person name="Van Houdt R."/>
            <person name="Moors H."/>
            <person name="Monsieurs P."/>
            <person name="Morin N."/>
            <person name="Michaux A."/>
            <person name="Benotmane M.A."/>
            <person name="Leys N."/>
            <person name="Vallaeys T."/>
            <person name="Lapidus A."/>
            <person name="Monchy S."/>
            <person name="Medigue C."/>
            <person name="Taghavi S."/>
            <person name="McCorkle S."/>
            <person name="Dunn J."/>
            <person name="van der Lelie D."/>
            <person name="Mergeay M."/>
        </authorList>
    </citation>
    <scope>NUCLEOTIDE SEQUENCE [LARGE SCALE GENOMIC DNA]</scope>
    <source>
        <strain>ATCC 43123 / DSM 2839 / NBRC 102507 / CH34</strain>
    </source>
</reference>
<feature type="chain" id="PRO_1000023956" description="Uroporphyrinogen decarboxylase">
    <location>
        <begin position="1"/>
        <end position="367"/>
    </location>
</feature>
<feature type="binding site" evidence="1">
    <location>
        <begin position="27"/>
        <end position="31"/>
    </location>
    <ligand>
        <name>substrate</name>
    </ligand>
</feature>
<feature type="binding site" evidence="1">
    <location>
        <position position="77"/>
    </location>
    <ligand>
        <name>substrate</name>
    </ligand>
</feature>
<feature type="binding site" evidence="1">
    <location>
        <position position="157"/>
    </location>
    <ligand>
        <name>substrate</name>
    </ligand>
</feature>
<feature type="binding site" evidence="1">
    <location>
        <position position="212"/>
    </location>
    <ligand>
        <name>substrate</name>
    </ligand>
</feature>
<feature type="binding site" evidence="1">
    <location>
        <position position="333"/>
    </location>
    <ligand>
        <name>substrate</name>
    </ligand>
</feature>
<feature type="site" description="Transition state stabilizer" evidence="1">
    <location>
        <position position="77"/>
    </location>
</feature>
<gene>
    <name evidence="1" type="primary">hemE</name>
    <name type="ordered locus">Rmet_3491</name>
</gene>